<dbReference type="EC" id="2.7.7.4" evidence="2"/>
<dbReference type="EMBL" id="CP001164">
    <property type="protein sequence ID" value="ACI38986.1"/>
    <property type="molecule type" value="Genomic_DNA"/>
</dbReference>
<dbReference type="RefSeq" id="WP_001090366.1">
    <property type="nucleotide sequence ID" value="NC_011353.1"/>
</dbReference>
<dbReference type="SMR" id="B5Z3B3"/>
<dbReference type="KEGG" id="ecf:ECH74115_4003"/>
<dbReference type="HOGENOM" id="CLU_007265_5_2_6"/>
<dbReference type="UniPathway" id="UPA00140">
    <property type="reaction ID" value="UER00204"/>
</dbReference>
<dbReference type="GO" id="GO:0005524">
    <property type="term" value="F:ATP binding"/>
    <property type="evidence" value="ECO:0007669"/>
    <property type="project" value="UniProtKB-KW"/>
</dbReference>
<dbReference type="GO" id="GO:0005525">
    <property type="term" value="F:GTP binding"/>
    <property type="evidence" value="ECO:0007669"/>
    <property type="project" value="UniProtKB-UniRule"/>
</dbReference>
<dbReference type="GO" id="GO:0003924">
    <property type="term" value="F:GTPase activity"/>
    <property type="evidence" value="ECO:0007669"/>
    <property type="project" value="InterPro"/>
</dbReference>
<dbReference type="GO" id="GO:0004781">
    <property type="term" value="F:sulfate adenylyltransferase (ATP) activity"/>
    <property type="evidence" value="ECO:0007669"/>
    <property type="project" value="UniProtKB-UniRule"/>
</dbReference>
<dbReference type="GO" id="GO:0070814">
    <property type="term" value="P:hydrogen sulfide biosynthetic process"/>
    <property type="evidence" value="ECO:0007669"/>
    <property type="project" value="UniProtKB-UniRule"/>
</dbReference>
<dbReference type="GO" id="GO:0000103">
    <property type="term" value="P:sulfate assimilation"/>
    <property type="evidence" value="ECO:0007669"/>
    <property type="project" value="UniProtKB-UniRule"/>
</dbReference>
<dbReference type="CDD" id="cd04166">
    <property type="entry name" value="CysN_ATPS"/>
    <property type="match status" value="1"/>
</dbReference>
<dbReference type="CDD" id="cd03695">
    <property type="entry name" value="CysN_NodQ_II"/>
    <property type="match status" value="1"/>
</dbReference>
<dbReference type="CDD" id="cd04095">
    <property type="entry name" value="CysN_NoDQ_III"/>
    <property type="match status" value="1"/>
</dbReference>
<dbReference type="FunFam" id="2.40.30.10:FF:000027">
    <property type="entry name" value="Sulfate adenylyltransferase subunit 1"/>
    <property type="match status" value="1"/>
</dbReference>
<dbReference type="FunFam" id="2.40.30.10:FF:000031">
    <property type="entry name" value="Sulfate adenylyltransferase subunit 1"/>
    <property type="match status" value="1"/>
</dbReference>
<dbReference type="FunFam" id="3.40.50.300:FF:000119">
    <property type="entry name" value="Sulfate adenylyltransferase subunit 1"/>
    <property type="match status" value="1"/>
</dbReference>
<dbReference type="Gene3D" id="3.40.50.300">
    <property type="entry name" value="P-loop containing nucleotide triphosphate hydrolases"/>
    <property type="match status" value="1"/>
</dbReference>
<dbReference type="Gene3D" id="2.40.30.10">
    <property type="entry name" value="Translation factors"/>
    <property type="match status" value="2"/>
</dbReference>
<dbReference type="HAMAP" id="MF_00062">
    <property type="entry name" value="Sulf_adenylyltr_sub1"/>
    <property type="match status" value="1"/>
</dbReference>
<dbReference type="InterPro" id="IPR041757">
    <property type="entry name" value="CysN_GTP-bd"/>
</dbReference>
<dbReference type="InterPro" id="IPR044138">
    <property type="entry name" value="CysN_II"/>
</dbReference>
<dbReference type="InterPro" id="IPR044139">
    <property type="entry name" value="CysN_NoDQ_III"/>
</dbReference>
<dbReference type="InterPro" id="IPR031157">
    <property type="entry name" value="G_TR_CS"/>
</dbReference>
<dbReference type="InterPro" id="IPR054696">
    <property type="entry name" value="GTP-eEF1A_C"/>
</dbReference>
<dbReference type="InterPro" id="IPR027417">
    <property type="entry name" value="P-loop_NTPase"/>
</dbReference>
<dbReference type="InterPro" id="IPR005225">
    <property type="entry name" value="Small_GTP-bd"/>
</dbReference>
<dbReference type="InterPro" id="IPR011779">
    <property type="entry name" value="SO4_adenylTrfase_lsu"/>
</dbReference>
<dbReference type="InterPro" id="IPR000795">
    <property type="entry name" value="T_Tr_GTP-bd_dom"/>
</dbReference>
<dbReference type="InterPro" id="IPR050100">
    <property type="entry name" value="TRAFAC_GTPase_members"/>
</dbReference>
<dbReference type="InterPro" id="IPR009000">
    <property type="entry name" value="Transl_B-barrel_sf"/>
</dbReference>
<dbReference type="InterPro" id="IPR009001">
    <property type="entry name" value="Transl_elong_EF1A/Init_IF2_C"/>
</dbReference>
<dbReference type="NCBIfam" id="TIGR02034">
    <property type="entry name" value="CysN"/>
    <property type="match status" value="1"/>
</dbReference>
<dbReference type="NCBIfam" id="NF003478">
    <property type="entry name" value="PRK05124.1"/>
    <property type="match status" value="1"/>
</dbReference>
<dbReference type="NCBIfam" id="TIGR00231">
    <property type="entry name" value="small_GTP"/>
    <property type="match status" value="1"/>
</dbReference>
<dbReference type="PANTHER" id="PTHR23115">
    <property type="entry name" value="TRANSLATION FACTOR"/>
    <property type="match status" value="1"/>
</dbReference>
<dbReference type="Pfam" id="PF22594">
    <property type="entry name" value="GTP-eEF1A_C"/>
    <property type="match status" value="1"/>
</dbReference>
<dbReference type="Pfam" id="PF00009">
    <property type="entry name" value="GTP_EFTU"/>
    <property type="match status" value="1"/>
</dbReference>
<dbReference type="PRINTS" id="PR00315">
    <property type="entry name" value="ELONGATNFCT"/>
</dbReference>
<dbReference type="SUPFAM" id="SSF50465">
    <property type="entry name" value="EF-Tu/eEF-1alpha/eIF2-gamma C-terminal domain"/>
    <property type="match status" value="1"/>
</dbReference>
<dbReference type="SUPFAM" id="SSF52540">
    <property type="entry name" value="P-loop containing nucleoside triphosphate hydrolases"/>
    <property type="match status" value="1"/>
</dbReference>
<dbReference type="SUPFAM" id="SSF50447">
    <property type="entry name" value="Translation proteins"/>
    <property type="match status" value="1"/>
</dbReference>
<dbReference type="PROSITE" id="PS00301">
    <property type="entry name" value="G_TR_1"/>
    <property type="match status" value="1"/>
</dbReference>
<dbReference type="PROSITE" id="PS51722">
    <property type="entry name" value="G_TR_2"/>
    <property type="match status" value="1"/>
</dbReference>
<name>CYSN_ECO5E</name>
<reference key="1">
    <citation type="journal article" date="2011" name="Proc. Natl. Acad. Sci. U.S.A.">
        <title>Genomic anatomy of Escherichia coli O157:H7 outbreaks.</title>
        <authorList>
            <person name="Eppinger M."/>
            <person name="Mammel M.K."/>
            <person name="Leclerc J.E."/>
            <person name="Ravel J."/>
            <person name="Cebula T.A."/>
        </authorList>
    </citation>
    <scope>NUCLEOTIDE SEQUENCE [LARGE SCALE GENOMIC DNA]</scope>
    <source>
        <strain>EC4115 / EHEC</strain>
    </source>
</reference>
<comment type="function">
    <text evidence="2">With CysD forms the ATP sulfurylase (ATPS) that catalyzes the adenylation of sulfate producing adenosine 5'-phosphosulfate (APS) and diphosphate, the first enzymatic step in sulfur assimilation pathway. APS synthesis involves the formation of a high-energy phosphoric-sulfuric acid anhydride bond driven by GTP hydrolysis by CysN coupled to ATP hydrolysis by CysD.</text>
</comment>
<comment type="catalytic activity">
    <reaction evidence="2">
        <text>sulfate + ATP + H(+) = adenosine 5'-phosphosulfate + diphosphate</text>
        <dbReference type="Rhea" id="RHEA:18133"/>
        <dbReference type="ChEBI" id="CHEBI:15378"/>
        <dbReference type="ChEBI" id="CHEBI:16189"/>
        <dbReference type="ChEBI" id="CHEBI:30616"/>
        <dbReference type="ChEBI" id="CHEBI:33019"/>
        <dbReference type="ChEBI" id="CHEBI:58243"/>
        <dbReference type="EC" id="2.7.7.4"/>
    </reaction>
</comment>
<comment type="pathway">
    <text evidence="2">Sulfur metabolism; hydrogen sulfide biosynthesis; sulfite from sulfate: step 1/3.</text>
</comment>
<comment type="subunit">
    <text evidence="2">Heterodimer composed of CysD, the smaller subunit, and CysN.</text>
</comment>
<comment type="similarity">
    <text evidence="2">Belongs to the TRAFAC class translation factor GTPase superfamily. Classic translation factor GTPase family. CysN/NodQ subfamily.</text>
</comment>
<gene>
    <name evidence="2" type="primary">cysN</name>
    <name type="ordered locus">ECH74115_4003</name>
</gene>
<sequence>MNTALAQQIANEGGVEAWMIAQQHKSLLRFLTCGSVDDGKSTLIGRLLHDTRQIYEDQLSSLHNDSKRHGTQGEKLDLALLVDGLQAEREQGITIDVAYRYFSTEKRKFIIADTPGHEQYTRNMATGASTCELAILLIDARKGVLDQTRRHSFISTLLGIKHLVVAINKMDLVDYSEETFTRIREDYLTFAGQLPGNLDIRFVPLSALEGDNVASQSESMPWYSGPTLLEVLETVEIQRVVDAQPMRFPVQYVNRPNLDFRGYAGTLASGRVEVGQRVKVLPSGVESNVARIVTFDGDREEAFAGEAITLVLTDEIDISRGDLLLAADEALPAVQSASVDVVWMAEQPLSPGQSYDIKIAGKKTRSRVDGIRYQVDINNLTQREVENLPLNGIGLVDLTFDEPLVLDRYQQNPVTGGLIFIDRLSNVTVGAGMVHEPVSQATAAPSEFSAFELELNALVRRHFPHWGARDLLGEK</sequence>
<feature type="chain" id="PRO_1000092138" description="Sulfate adenylyltransferase subunit 1">
    <location>
        <begin position="1"/>
        <end position="475"/>
    </location>
</feature>
<feature type="domain" description="tr-type G">
    <location>
        <begin position="25"/>
        <end position="239"/>
    </location>
</feature>
<feature type="region of interest" description="G1" evidence="1">
    <location>
        <begin position="34"/>
        <end position="41"/>
    </location>
</feature>
<feature type="region of interest" description="G2" evidence="1">
    <location>
        <begin position="92"/>
        <end position="96"/>
    </location>
</feature>
<feature type="region of interest" description="G3" evidence="1">
    <location>
        <begin position="113"/>
        <end position="116"/>
    </location>
</feature>
<feature type="region of interest" description="G4" evidence="1">
    <location>
        <begin position="168"/>
        <end position="171"/>
    </location>
</feature>
<feature type="region of interest" description="G5" evidence="1">
    <location>
        <begin position="206"/>
        <end position="208"/>
    </location>
</feature>
<feature type="binding site" evidence="2">
    <location>
        <begin position="34"/>
        <end position="41"/>
    </location>
    <ligand>
        <name>GTP</name>
        <dbReference type="ChEBI" id="CHEBI:37565"/>
    </ligand>
</feature>
<feature type="binding site" evidence="2">
    <location>
        <begin position="113"/>
        <end position="117"/>
    </location>
    <ligand>
        <name>GTP</name>
        <dbReference type="ChEBI" id="CHEBI:37565"/>
    </ligand>
</feature>
<feature type="binding site" evidence="2">
    <location>
        <begin position="168"/>
        <end position="171"/>
    </location>
    <ligand>
        <name>GTP</name>
        <dbReference type="ChEBI" id="CHEBI:37565"/>
    </ligand>
</feature>
<organism>
    <name type="scientific">Escherichia coli O157:H7 (strain EC4115 / EHEC)</name>
    <dbReference type="NCBI Taxonomy" id="444450"/>
    <lineage>
        <taxon>Bacteria</taxon>
        <taxon>Pseudomonadati</taxon>
        <taxon>Pseudomonadota</taxon>
        <taxon>Gammaproteobacteria</taxon>
        <taxon>Enterobacterales</taxon>
        <taxon>Enterobacteriaceae</taxon>
        <taxon>Escherichia</taxon>
    </lineage>
</organism>
<evidence type="ECO:0000250" key="1"/>
<evidence type="ECO:0000255" key="2">
    <source>
        <dbReference type="HAMAP-Rule" id="MF_00062"/>
    </source>
</evidence>
<accession>B5Z3B3</accession>
<proteinExistence type="inferred from homology"/>
<keyword id="KW-0067">ATP-binding</keyword>
<keyword id="KW-0342">GTP-binding</keyword>
<keyword id="KW-0547">Nucleotide-binding</keyword>
<keyword id="KW-0548">Nucleotidyltransferase</keyword>
<keyword id="KW-0808">Transferase</keyword>
<protein>
    <recommendedName>
        <fullName evidence="2">Sulfate adenylyltransferase subunit 1</fullName>
        <ecNumber evidence="2">2.7.7.4</ecNumber>
    </recommendedName>
    <alternativeName>
        <fullName evidence="2">ATP-sulfurylase large subunit</fullName>
    </alternativeName>
    <alternativeName>
        <fullName evidence="2">Sulfate adenylate transferase</fullName>
        <shortName evidence="2">SAT</shortName>
    </alternativeName>
</protein>